<organism>
    <name type="scientific">Human cytomegalovirus (strain AD169)</name>
    <name type="common">HHV-5</name>
    <name type="synonym">Human herpesvirus 5</name>
    <dbReference type="NCBI Taxonomy" id="10360"/>
    <lineage>
        <taxon>Viruses</taxon>
        <taxon>Duplodnaviria</taxon>
        <taxon>Heunggongvirae</taxon>
        <taxon>Peploviricota</taxon>
        <taxon>Herviviricetes</taxon>
        <taxon>Herpesvirales</taxon>
        <taxon>Orthoherpesviridae</taxon>
        <taxon>Betaherpesvirinae</taxon>
        <taxon>Cytomegalovirus</taxon>
        <taxon>Cytomegalovirus humanbeta5</taxon>
        <taxon>Human cytomegalovirus</taxon>
    </lineage>
</organism>
<evidence type="ECO:0000250" key="1"/>
<evidence type="ECO:0000255" key="2"/>
<evidence type="ECO:0000255" key="3">
    <source>
        <dbReference type="HAMAP-Rule" id="MF_04032"/>
    </source>
</evidence>
<evidence type="ECO:0000256" key="4">
    <source>
        <dbReference type="SAM" id="MobiDB-lite"/>
    </source>
</evidence>
<evidence type="ECO:0000269" key="5">
    <source>
    </source>
</evidence>
<evidence type="ECO:0000269" key="6">
    <source>
    </source>
</evidence>
<evidence type="ECO:0000269" key="7">
    <source>
    </source>
</evidence>
<evidence type="ECO:0000269" key="8">
    <source>
    </source>
</evidence>
<evidence type="ECO:0000269" key="9">
    <source>
    </source>
</evidence>
<evidence type="ECO:0007829" key="10">
    <source>
        <dbReference type="PDB" id="7SSC"/>
    </source>
</evidence>
<dbReference type="EMBL" id="X17403">
    <property type="protein sequence ID" value="CAA35414.1"/>
    <property type="molecule type" value="Genomic_DNA"/>
</dbReference>
<dbReference type="EMBL" id="X04606">
    <property type="protein sequence ID" value="CAA28274.1"/>
    <property type="molecule type" value="Genomic_DNA"/>
</dbReference>
<dbReference type="EMBL" id="M17209">
    <property type="protein sequence ID" value="AAA46009.1"/>
    <property type="molecule type" value="Genomic_DNA"/>
</dbReference>
<dbReference type="EMBL" id="M14709">
    <property type="protein sequence ID" value="AAA45987.1"/>
    <property type="molecule type" value="Genomic_DNA"/>
</dbReference>
<dbReference type="EMBL" id="BK000394">
    <property type="protein sequence ID" value="DAA00160.1"/>
    <property type="molecule type" value="Genomic_DNA"/>
</dbReference>
<dbReference type="PIR" id="A25365">
    <property type="entry name" value="VGBEC1"/>
</dbReference>
<dbReference type="PDB" id="5CXF">
    <property type="method" value="X-ray"/>
    <property type="resolution" value="3.60 A"/>
    <property type="chains" value="A/B/C=78-706"/>
</dbReference>
<dbReference type="PDB" id="6UOE">
    <property type="method" value="X-ray"/>
    <property type="resolution" value="1.80 A"/>
    <property type="chains" value="P=65-79"/>
</dbReference>
<dbReference type="PDB" id="7SSC">
    <property type="method" value="X-ray"/>
    <property type="resolution" value="1.80 A"/>
    <property type="chains" value="P=65-79"/>
</dbReference>
<dbReference type="PDBsum" id="5CXF"/>
<dbReference type="PDBsum" id="6UOE"/>
<dbReference type="PDBsum" id="7SSC"/>
<dbReference type="SMR" id="P06473"/>
<dbReference type="ChEMBL" id="CHEMBL3988503"/>
<dbReference type="GlyCosmos" id="P06473">
    <property type="glycosylation" value="19 sites, No reported glycans"/>
</dbReference>
<dbReference type="ABCD" id="P06473">
    <property type="antibodies" value="55 sequenced antibodies"/>
</dbReference>
<dbReference type="Proteomes" id="UP000008991">
    <property type="component" value="Segment"/>
</dbReference>
<dbReference type="Proteomes" id="UP000008992">
    <property type="component" value="Segment"/>
</dbReference>
<dbReference type="GO" id="GO:0044175">
    <property type="term" value="C:host cell endosome membrane"/>
    <property type="evidence" value="ECO:0007669"/>
    <property type="project" value="UniProtKB-SubCell"/>
</dbReference>
<dbReference type="GO" id="GO:0044178">
    <property type="term" value="C:host cell Golgi membrane"/>
    <property type="evidence" value="ECO:0007669"/>
    <property type="project" value="UniProtKB-SubCell"/>
</dbReference>
<dbReference type="GO" id="GO:0020002">
    <property type="term" value="C:host cell plasma membrane"/>
    <property type="evidence" value="ECO:0007669"/>
    <property type="project" value="UniProtKB-SubCell"/>
</dbReference>
<dbReference type="GO" id="GO:0016020">
    <property type="term" value="C:membrane"/>
    <property type="evidence" value="ECO:0007669"/>
    <property type="project" value="UniProtKB-KW"/>
</dbReference>
<dbReference type="GO" id="GO:0019031">
    <property type="term" value="C:viral envelope"/>
    <property type="evidence" value="ECO:0007669"/>
    <property type="project" value="UniProtKB-KW"/>
</dbReference>
<dbReference type="GO" id="GO:0055036">
    <property type="term" value="C:virion membrane"/>
    <property type="evidence" value="ECO:0007669"/>
    <property type="project" value="UniProtKB-SubCell"/>
</dbReference>
<dbReference type="GO" id="GO:0046718">
    <property type="term" value="P:symbiont entry into host cell"/>
    <property type="evidence" value="ECO:0007669"/>
    <property type="project" value="UniProtKB-KW"/>
</dbReference>
<dbReference type="GO" id="GO:0019062">
    <property type="term" value="P:virion attachment to host cell"/>
    <property type="evidence" value="ECO:0007669"/>
    <property type="project" value="UniProtKB-KW"/>
</dbReference>
<dbReference type="Gene3D" id="1.20.5.1890">
    <property type="match status" value="1"/>
</dbReference>
<dbReference type="Gene3D" id="2.30.29.100">
    <property type="match status" value="2"/>
</dbReference>
<dbReference type="Gene3D" id="2.30.30.1230">
    <property type="match status" value="1"/>
</dbReference>
<dbReference type="Gene3D" id="6.10.250.3280">
    <property type="match status" value="1"/>
</dbReference>
<dbReference type="HAMAP" id="MF_04032">
    <property type="entry name" value="HSV_GB"/>
    <property type="match status" value="1"/>
</dbReference>
<dbReference type="InterPro" id="IPR021044">
    <property type="entry name" value="Glycoprot_B_antigenic_N"/>
</dbReference>
<dbReference type="InterPro" id="IPR035377">
    <property type="entry name" value="Glycoprot_B_PH1"/>
</dbReference>
<dbReference type="InterPro" id="IPR035381">
    <property type="entry name" value="Glycoprot_B_PH2"/>
</dbReference>
<dbReference type="InterPro" id="IPR038631">
    <property type="entry name" value="Glycoprot_B_PH2_sf"/>
</dbReference>
<dbReference type="InterPro" id="IPR055341">
    <property type="entry name" value="Glycoprotein_B_ecto_C"/>
</dbReference>
<dbReference type="InterPro" id="IPR000234">
    <property type="entry name" value="Herpes_Glycoprot_B"/>
</dbReference>
<dbReference type="Pfam" id="PF17416">
    <property type="entry name" value="Glycoprot_B_PH1"/>
    <property type="match status" value="1"/>
</dbReference>
<dbReference type="Pfam" id="PF17417">
    <property type="entry name" value="Glycoprot_B_PH2"/>
    <property type="match status" value="1"/>
</dbReference>
<dbReference type="Pfam" id="PF00606">
    <property type="entry name" value="Glycoprotein_B"/>
    <property type="match status" value="1"/>
</dbReference>
<dbReference type="Pfam" id="PF12154">
    <property type="entry name" value="HCMVantigenic_N"/>
    <property type="match status" value="1"/>
</dbReference>
<dbReference type="SUPFAM" id="SSF161008">
    <property type="entry name" value="Viral glycoprotein ectodomain-like"/>
    <property type="match status" value="1"/>
</dbReference>
<accession>P06473</accession>
<accession>Q7M6M8</accession>
<name>GB_HCMVA</name>
<keyword id="KW-0002">3D-structure</keyword>
<keyword id="KW-1015">Disulfide bond</keyword>
<keyword id="KW-0325">Glycoprotein</keyword>
<keyword id="KW-1032">Host cell membrane</keyword>
<keyword id="KW-1039">Host endosome</keyword>
<keyword id="KW-1040">Host Golgi apparatus</keyword>
<keyword id="KW-1043">Host membrane</keyword>
<keyword id="KW-0945">Host-virus interaction</keyword>
<keyword id="KW-0472">Membrane</keyword>
<keyword id="KW-1185">Reference proteome</keyword>
<keyword id="KW-0732">Signal</keyword>
<keyword id="KW-0812">Transmembrane</keyword>
<keyword id="KW-1133">Transmembrane helix</keyword>
<keyword id="KW-1161">Viral attachment to host cell</keyword>
<keyword id="KW-0261">Viral envelope protein</keyword>
<keyword id="KW-0946">Virion</keyword>
<keyword id="KW-1160">Virus entry into host cell</keyword>
<organismHost>
    <name type="scientific">Homo sapiens</name>
    <name type="common">Human</name>
    <dbReference type="NCBI Taxonomy" id="9606"/>
</organismHost>
<gene>
    <name evidence="3" type="primary">gB</name>
    <name type="ORF">UL55</name>
</gene>
<protein>
    <recommendedName>
        <fullName evidence="3">Envelope glycoprotein B</fullName>
        <shortName evidence="3">gB</shortName>
    </recommendedName>
</protein>
<comment type="function">
    <text evidence="6 8">Envelope glycoprotein that plays a role in host cell entry, cell to-cell virus transmission, and fusion of infected cells. May be involved in the initial attachment via binding to heparan sulfate together with the gM/gN complex that binds heparin with higher affinity. Interacts with host integrin ITGB1, PDGFRA and EGFR that likely serve as postattachment entry receptors. Also participates in the fusion of viral and cellular membranes leading to virus entry into the host cell. Membrane fusion is mediated by the fusion machinery composed at least of gB and the heterodimer gH/gL.</text>
</comment>
<comment type="subunit">
    <text evidence="3 6 7 9">Homotrimer; disulfide-linked. Binds to heparan sulfate proteoglycans. Interacts with gH/gL heterodimer (By similarity). Interacts with host TLR1 and TLR2. Interacts with host C-type lectin CD209/DC-SIGN. Interacts with host ITGB1, EGFR, and PDGFRA.</text>
</comment>
<comment type="subcellular location">
    <subcellularLocation>
        <location evidence="3">Virion membrane</location>
        <topology evidence="3">Single-pass type I membrane protein</topology>
    </subcellularLocation>
    <subcellularLocation>
        <location evidence="3">Host cell membrane</location>
        <topology evidence="3">Single-pass type I membrane protein</topology>
    </subcellularLocation>
    <subcellularLocation>
        <location evidence="3">Host endosome membrane</location>
        <topology evidence="3">Single-pass type I membrane protein</topology>
    </subcellularLocation>
    <subcellularLocation>
        <location evidence="3">Host Golgi apparatus membrane</location>
        <topology evidence="3">Single-pass type I membrane protein</topology>
    </subcellularLocation>
    <text evidence="3">During virion morphogenesis, this protein probably accumulates in the endosomes and trans-Golgi where secondary envelopment occurs. It is probably transported to the cell surface from where it is endocytosed and directed to the trans-Golgi network (TGN).</text>
</comment>
<comment type="PTM">
    <text evidence="1">A proteolytic cleavage by host furin generates two subunits that remain linked by disulfide bonds.</text>
</comment>
<comment type="similarity">
    <text evidence="3">Belongs to the herpesviridae glycoprotein B family.</text>
</comment>
<proteinExistence type="evidence at protein level"/>
<reference key="1">
    <citation type="journal article" date="1986" name="EMBO J.">
        <title>Identification of the human cytomegalovirus glycoprotein B gene and induction of neutralizing antibodies via its expression in recombinant vaccinia virus.</title>
        <authorList>
            <person name="Cranage M.P."/>
            <person name="Kouzarides T."/>
            <person name="Bankier A.T."/>
            <person name="Satchwell S."/>
            <person name="Weston K."/>
            <person name="Tomlinson P."/>
            <person name="Barrell B.G."/>
            <person name="Hart H."/>
            <person name="Bell S.E."/>
            <person name="Minson A.C."/>
            <person name="Smith G.L."/>
        </authorList>
    </citation>
    <scope>NUCLEOTIDE SEQUENCE [GENOMIC DNA]</scope>
</reference>
<reference key="2">
    <citation type="journal article" date="1987" name="Virology">
        <title>Large-scale rearrangement of homologous regions in the genomes of HCMV and EBV.</title>
        <authorList>
            <person name="Kouzarides T."/>
            <person name="Bankier A.T."/>
            <person name="Satchwell S.C."/>
            <person name="Weston K.M."/>
            <person name="Tomlinson P."/>
            <person name="Barrell B.G."/>
        </authorList>
    </citation>
    <scope>NUCLEOTIDE SEQUENCE [GENOMIC DNA]</scope>
</reference>
<reference key="3">
    <citation type="journal article" date="1987" name="J. Virol.">
        <title>Sequence and transcription analysis of the human cytomegalovirus DNA polymerase gene.</title>
        <authorList>
            <person name="Kouzarides T."/>
            <person name="Bankier A.T."/>
            <person name="Satchwell S.C."/>
            <person name="Weston K.M."/>
            <person name="Tomlinson P."/>
            <person name="Barrell B.G."/>
        </authorList>
    </citation>
    <scope>NUCLEOTIDE SEQUENCE [GENOMIC DNA] OF 735-906</scope>
</reference>
<reference key="4">
    <citation type="journal article" date="1990" name="Curr. Top. Microbiol. Immunol.">
        <title>Analysis of the protein-coding content of the sequence of human cytomegalovirus strain AD169.</title>
        <authorList>
            <person name="Chee M.S."/>
            <person name="Bankier A.T."/>
            <person name="Beck S."/>
            <person name="Bohni R."/>
            <person name="Brown C.M."/>
            <person name="Cerny R."/>
            <person name="Horsnell T."/>
            <person name="Hutchison C.A. III"/>
            <person name="Kouzarides T."/>
            <person name="Martignetti J.A."/>
            <person name="Preddie E."/>
            <person name="Satchwell S.C."/>
            <person name="Tomlinson P."/>
            <person name="Weston K.M."/>
            <person name="Barrell B.G."/>
        </authorList>
    </citation>
    <scope>NUCLEOTIDE SEQUENCE [LARGE SCALE GENOMIC DNA]</scope>
</reference>
<reference key="5">
    <citation type="journal article" date="2002" name="J. Virol.">
        <title>Disulfide bond configuration of human cytomegalovirus glycoprotein B.</title>
        <authorList>
            <person name="Lopper M."/>
            <person name="Compton T."/>
        </authorList>
    </citation>
    <scope>DISULFIDE BONDS</scope>
</reference>
<reference key="6">
    <citation type="journal article" date="2002" name="Immunity">
        <title>Human cytomegalovirus binding to DC-SIGN is required for dendritic cell infection and target cell trans-infection.</title>
        <authorList>
            <person name="Halary F."/>
            <person name="Amara A."/>
            <person name="Lortat-Jacob H."/>
            <person name="Messerle M."/>
            <person name="Delaunay T."/>
            <person name="Houles C."/>
            <person name="Fieschi F."/>
            <person name="Arenzana-Seisdedos F."/>
            <person name="Moreau J.-F."/>
            <person name="Dechanet-Merville J."/>
        </authorList>
    </citation>
    <scope>FUNCTION</scope>
    <scope>INTERACTION WITH HUMAN CD209/DC-SIGN</scope>
</reference>
<reference key="7">
    <citation type="journal article" date="2003" name="J. Gen. Virol.">
        <title>The human cytomegalovirus genome revisited: comparison with the chimpanzee cytomegalovirus genome.</title>
        <authorList>
            <person name="Davison A.J."/>
            <person name="Dolan A."/>
            <person name="Akter P."/>
            <person name="Addison C."/>
            <person name="Dargan D.J."/>
            <person name="Alcendor D.J."/>
            <person name="McGeoch D.J."/>
            <person name="Hayward G.S."/>
        </authorList>
    </citation>
    <scope>GENOME REANNOTATION</scope>
</reference>
<reference key="8">
    <citation type="journal article" date="2003" name="J. Gen. Virol.">
        <authorList>
            <person name="Davison A.J."/>
            <person name="Dolan A."/>
            <person name="Akter P."/>
            <person name="Addison C."/>
            <person name="Dargan D.J."/>
            <person name="Alcendor D.J."/>
            <person name="McGeoch D.J."/>
            <person name="Hayward G.S."/>
        </authorList>
    </citation>
    <scope>ERRATUM OF PUBMED:12533697</scope>
</reference>
<reference key="9">
    <citation type="journal article" date="2004" name="J. Virol.">
        <title>Identification of proteins in human cytomegalovirus (HCMV) particles: the HCMV proteome.</title>
        <authorList>
            <person name="Varnum S.M."/>
            <person name="Streblow D.N."/>
            <person name="Monroe M.E."/>
            <person name="Smith P."/>
            <person name="Auberry K.J."/>
            <person name="Pasa-Tolic L."/>
            <person name="Wang D."/>
            <person name="Camp D.G. II"/>
            <person name="Rodland K."/>
            <person name="Wiley S."/>
            <person name="Britt W."/>
            <person name="Shenk T."/>
            <person name="Smith R.D."/>
            <person name="Nelson J.A."/>
        </authorList>
    </citation>
    <scope>IDENTIFICATION</scope>
</reference>
<reference key="10">
    <citation type="journal article" date="2004" name="J. Virol.">
        <authorList>
            <person name="Varnum S.M."/>
            <person name="Streblow D.N."/>
            <person name="Monroe M.E."/>
            <person name="Smith P."/>
            <person name="Auberry K.J."/>
            <person name="Pasa-Tolic L."/>
            <person name="Wang D."/>
            <person name="Camp D.G. II"/>
            <person name="Rodland K."/>
            <person name="Wiley S."/>
            <person name="Britt W."/>
            <person name="Shenk T."/>
            <person name="Smith R.D."/>
            <person name="Nelson J.A."/>
        </authorList>
    </citation>
    <scope>ERRATUM OF PUBMED:15452216</scope>
</reference>
<reference key="11">
    <citation type="journal article" date="2006" name="J. Immunol.">
        <title>Human cytomegalovirus envelope glycoproteins B and H are necessary for TLR2 activation in permissive cells.</title>
        <authorList>
            <person name="Boehme K.W."/>
            <person name="Guerrero M."/>
            <person name="Compton T."/>
        </authorList>
    </citation>
    <scope>INTERACTION WITH HOST TLR1 AND TLR2</scope>
</reference>
<reference key="12">
    <citation type="journal article" date="2009" name="J. Virol.">
        <title>Human cytomegalovirus glycoprotein B is required for virus entry and cell-to-cell spread but not for virion attachment, assembly, or egress.</title>
        <authorList>
            <person name="Isaacson M.K."/>
            <person name="Compton T."/>
        </authorList>
    </citation>
    <scope>FUNCTION</scope>
</reference>
<reference key="13">
    <citation type="journal article" date="2010" name="J. Virol.">
        <title>The glycoprotein B disintegrin-like domain binds beta 1 integrin to mediate cytomegalovirus entry.</title>
        <authorList>
            <person name="Feire A.L."/>
            <person name="Roy R.M."/>
            <person name="Manley K."/>
            <person name="Compton T."/>
        </authorList>
    </citation>
    <scope>INTERACTION WITH HOST ITGB1</scope>
</reference>
<sequence>MESRIWCLVVCVNLCIVCLGAAVSSSSTSHATSSTHNGSHTSRTTSAQTRSVYSQHVTSSEAVSHRANETIYNTTLKYGDVVGVNTTKYPYRVCSMAQGTDLIRFERNIICTSMKPINEDLDEGIMVVYKRNIVAHTFKVRVYQKVLTFRRSYAYIYTTYLLGSNTEYVAPPMWEIHHINKFAQCYSSYSRVIGGTVFVAYHRDSYENKTMQLIPDDYSNTHSTRYVTVKDQWHSRGSTWLYRETCNLNCMLTITTARSKYPYHFFATSTGDVVYISPFYNGTNRNASYFGENADKFFIFPNYTIVSDFGRPNAAPETHRLVAFLERADSVISWDIQDEKNVTCQLTFWEASERTIRSEAEDSYHFSSAKMTATFLSKKQEVNMSDSALDCVRDEAINKLQQIFNTSYNQTYEKYGNVSVFETSGGLVVFWQGIKQKSLVELERLANRSSLNITHRTRRSTSDNNTTHLSSMESVHNLVYAQLQFTYDTLRGYINRALAQIAEAWCVDQRRTLEVFKELSKINPSAILSAIYNKPIAARFMGDVLGLASCVTINQTSVKVLRDMNVKESPGRCYSRPVVIFNFANSSYVQYGQLGEDNEILLGNHRTEECQLPSLKIFIAGNSAYEYVDYLFKRMIDLSSISTVDSMIALDIDPLENTDFRVLELYSQKELRSSNVFDLEEIMREFNSYKQRVKYVEDKVVDPLPPYLKGLDDLMSGLGAAGKAVGVAIGAVGGAVASVVEGVATFLKNPFGAFTIILVAIAVVIITYLIYTRQRRLCTQPLQNLFPYLVSADGTTVTSGSTKDTSLQAPPSYEESVYNSGRKGPGPPSSDASTAAPPYTNEQAYQMLLALARLDAEQRAQQNGTDSLDGQTGTQDKGQKPNLLDRLRHRKNGYRHLKDSDEEENV</sequence>
<feature type="signal peptide" evidence="3">
    <location>
        <begin position="1"/>
        <end position="31"/>
    </location>
</feature>
<feature type="chain" id="PRO_0000038192" description="Envelope glycoprotein B" evidence="3">
    <location>
        <begin position="32"/>
        <end position="906"/>
    </location>
</feature>
<feature type="topological domain" description="Virion surface" evidence="3">
    <location>
        <begin position="32"/>
        <end position="750"/>
    </location>
</feature>
<feature type="transmembrane region" description="Helical" evidence="3">
    <location>
        <begin position="751"/>
        <end position="771"/>
    </location>
</feature>
<feature type="topological domain" description="Intravirion" evidence="3">
    <location>
        <begin position="772"/>
        <end position="906"/>
    </location>
</feature>
<feature type="region of interest" description="Disordered" evidence="4">
    <location>
        <begin position="29"/>
        <end position="51"/>
    </location>
</feature>
<feature type="region of interest" description="Involved in fusion and/or binding to host membrane" evidence="3">
    <location>
        <begin position="152"/>
        <end position="158"/>
    </location>
</feature>
<feature type="region of interest" description="Involved in fusion and/or binding to host membrane" evidence="3">
    <location>
        <begin position="237"/>
        <end position="244"/>
    </location>
</feature>
<feature type="region of interest" description="Hydrophobic membrane proximal region" evidence="3">
    <location>
        <begin position="696"/>
        <end position="748"/>
    </location>
</feature>
<feature type="region of interest" description="Hydrophobic membrane proximal region">
    <location>
        <begin position="727"/>
        <end position="747"/>
    </location>
</feature>
<feature type="region of interest" description="Disordered" evidence="4">
    <location>
        <begin position="797"/>
        <end position="837"/>
    </location>
</feature>
<feature type="region of interest" description="Disordered" evidence="4">
    <location>
        <begin position="856"/>
        <end position="906"/>
    </location>
</feature>
<feature type="short sequence motif" description="Internalization motif" evidence="3">
    <location>
        <begin position="894"/>
        <end position="897"/>
    </location>
</feature>
<feature type="compositionally biased region" description="Low complexity" evidence="4">
    <location>
        <begin position="29"/>
        <end position="46"/>
    </location>
</feature>
<feature type="compositionally biased region" description="Polar residues" evidence="4">
    <location>
        <begin position="797"/>
        <end position="809"/>
    </location>
</feature>
<feature type="compositionally biased region" description="Polar residues" evidence="4">
    <location>
        <begin position="859"/>
        <end position="876"/>
    </location>
</feature>
<feature type="compositionally biased region" description="Basic and acidic residues" evidence="4">
    <location>
        <begin position="877"/>
        <end position="886"/>
    </location>
</feature>
<feature type="site" description="Cleavage; by host furin" evidence="2">
    <location>
        <begin position="459"/>
        <end position="460"/>
    </location>
</feature>
<feature type="glycosylation site" description="N-linked (GlcNAc...) asparagine; by host" evidence="3">
    <location>
        <position position="37"/>
    </location>
</feature>
<feature type="glycosylation site" description="N-linked (GlcNAc...) asparagine; by host" evidence="3">
    <location>
        <position position="68"/>
    </location>
</feature>
<feature type="glycosylation site" description="N-linked (GlcNAc...) asparagine; by host" evidence="3">
    <location>
        <position position="73"/>
    </location>
</feature>
<feature type="glycosylation site" description="N-linked (GlcNAc...) asparagine; by host" evidence="3">
    <location>
        <position position="85"/>
    </location>
</feature>
<feature type="glycosylation site" description="N-linked (GlcNAc...) asparagine; by host" evidence="3">
    <location>
        <position position="208"/>
    </location>
</feature>
<feature type="glycosylation site" description="N-linked (GlcNAc...) asparagine; by host" evidence="3">
    <location>
        <position position="281"/>
    </location>
</feature>
<feature type="glycosylation site" description="N-linked (GlcNAc...) asparagine; by host" evidence="3">
    <location>
        <position position="286"/>
    </location>
</feature>
<feature type="glycosylation site" description="N-linked (GlcNAc...) asparagine; by host" evidence="3">
    <location>
        <position position="302"/>
    </location>
</feature>
<feature type="glycosylation site" description="N-linked (GlcNAc...) asparagine; by host" evidence="3">
    <location>
        <position position="341"/>
    </location>
</feature>
<feature type="glycosylation site" description="N-linked (GlcNAc...) asparagine; by host" evidence="3">
    <location>
        <position position="383"/>
    </location>
</feature>
<feature type="glycosylation site" description="N-linked (GlcNAc...) asparagine; by host" evidence="3">
    <location>
        <position position="405"/>
    </location>
</feature>
<feature type="glycosylation site" description="N-linked (GlcNAc...) asparagine; by host" evidence="3">
    <location>
        <position position="409"/>
    </location>
</feature>
<feature type="glycosylation site" description="N-linked (GlcNAc...) asparagine; by host" evidence="3">
    <location>
        <position position="417"/>
    </location>
</feature>
<feature type="glycosylation site" description="N-linked (GlcNAc...) asparagine; by host" evidence="3">
    <location>
        <position position="447"/>
    </location>
</feature>
<feature type="glycosylation site" description="N-linked (GlcNAc...) asparagine; by host" evidence="3">
    <location>
        <position position="452"/>
    </location>
</feature>
<feature type="glycosylation site" description="N-linked (GlcNAc...) asparagine; by host" evidence="3">
    <location>
        <position position="464"/>
    </location>
</feature>
<feature type="glycosylation site" description="N-linked (GlcNAc...) asparagine; by host" evidence="3">
    <location>
        <position position="465"/>
    </location>
</feature>
<feature type="glycosylation site" description="N-linked (GlcNAc...) asparagine; by host" evidence="3">
    <location>
        <position position="554"/>
    </location>
</feature>
<feature type="glycosylation site" description="N-linked (GlcNAc...) asparagine; by host" evidence="3">
    <location>
        <position position="585"/>
    </location>
</feature>
<feature type="disulfide bond" evidence="3 5">
    <location>
        <begin position="94"/>
        <end position="550"/>
    </location>
</feature>
<feature type="disulfide bond" evidence="3 5">
    <location>
        <begin position="111"/>
        <end position="506"/>
    </location>
</feature>
<feature type="disulfide bond" evidence="3">
    <location>
        <begin position="185"/>
        <end position="250"/>
    </location>
</feature>
<feature type="disulfide bond" evidence="5">
    <location>
        <begin position="246"/>
        <end position="250"/>
    </location>
</feature>
<feature type="disulfide bond" evidence="3 5">
    <location>
        <begin position="344"/>
        <end position="391"/>
    </location>
</feature>
<feature type="disulfide bond" evidence="3 5">
    <location>
        <begin position="573"/>
        <end position="610"/>
    </location>
</feature>
<feature type="strand" evidence="10">
    <location>
        <begin position="75"/>
        <end position="77"/>
    </location>
</feature>